<protein>
    <recommendedName>
        <fullName>High-potential iron-sulfur protein</fullName>
        <shortName>HiPIP</shortName>
    </recommendedName>
</protein>
<accession>P80176</accession>
<feature type="chain" id="PRO_0000220429" description="High-potential iron-sulfur protein">
    <location>
        <begin position="1"/>
        <end position="83"/>
    </location>
</feature>
<feature type="binding site" evidence="2 3">
    <location>
        <position position="43"/>
    </location>
    <ligand>
        <name>[4Fe-4S] cluster</name>
        <dbReference type="ChEBI" id="CHEBI:49883"/>
    </ligand>
</feature>
<feature type="binding site" evidence="2 3">
    <location>
        <position position="46"/>
    </location>
    <ligand>
        <name>[4Fe-4S] cluster</name>
        <dbReference type="ChEBI" id="CHEBI:49883"/>
    </ligand>
</feature>
<feature type="binding site" evidence="2 3">
    <location>
        <position position="61"/>
    </location>
    <ligand>
        <name>[4Fe-4S] cluster</name>
        <dbReference type="ChEBI" id="CHEBI:49883"/>
    </ligand>
</feature>
<feature type="binding site" evidence="2 3">
    <location>
        <position position="75"/>
    </location>
    <ligand>
        <name>[4Fe-4S] cluster</name>
        <dbReference type="ChEBI" id="CHEBI:49883"/>
    </ligand>
</feature>
<feature type="helix" evidence="5">
    <location>
        <begin position="12"/>
        <end position="17"/>
    </location>
</feature>
<feature type="strand" evidence="5">
    <location>
        <begin position="20"/>
        <end position="22"/>
    </location>
</feature>
<feature type="helix" evidence="5">
    <location>
        <begin position="23"/>
        <end position="25"/>
    </location>
</feature>
<feature type="helix" evidence="5">
    <location>
        <begin position="28"/>
        <end position="31"/>
    </location>
</feature>
<feature type="helix" evidence="5">
    <location>
        <begin position="38"/>
        <end position="40"/>
    </location>
</feature>
<feature type="helix" evidence="5">
    <location>
        <begin position="43"/>
        <end position="45"/>
    </location>
</feature>
<feature type="strand" evidence="5">
    <location>
        <begin position="49"/>
        <end position="55"/>
    </location>
</feature>
<feature type="strand" evidence="5">
    <location>
        <begin position="58"/>
        <end position="61"/>
    </location>
</feature>
<feature type="strand" evidence="5">
    <location>
        <begin position="68"/>
        <end position="70"/>
    </location>
</feature>
<dbReference type="PIR" id="S35586">
    <property type="entry name" value="S35586"/>
</dbReference>
<dbReference type="PDB" id="1EYT">
    <property type="method" value="X-ray"/>
    <property type="resolution" value="1.50 A"/>
    <property type="chains" value="A=1-83"/>
</dbReference>
<dbReference type="PDB" id="1IUA">
    <property type="method" value="X-ray"/>
    <property type="resolution" value="0.80 A"/>
    <property type="chains" value="A=1-83"/>
</dbReference>
<dbReference type="PDB" id="2AMS">
    <property type="method" value="X-ray"/>
    <property type="resolution" value="1.40 A"/>
    <property type="chains" value="A=1-83"/>
</dbReference>
<dbReference type="PDB" id="2FLA">
    <property type="method" value="X-ray"/>
    <property type="resolution" value="0.95 A"/>
    <property type="chains" value="A=1-83"/>
</dbReference>
<dbReference type="PDB" id="3A38">
    <property type="method" value="X-ray"/>
    <property type="resolution" value="0.70 A"/>
    <property type="chains" value="A=1-83"/>
</dbReference>
<dbReference type="PDB" id="3A39">
    <property type="method" value="X-ray"/>
    <property type="resolution" value="0.72 A"/>
    <property type="chains" value="A=1-83"/>
</dbReference>
<dbReference type="PDB" id="5D8V">
    <property type="method" value="X-ray"/>
    <property type="resolution" value="0.48 A"/>
    <property type="chains" value="A=1-83"/>
</dbReference>
<dbReference type="PDB" id="5WQQ">
    <property type="method" value="X-ray"/>
    <property type="resolution" value="0.80 A"/>
    <property type="chains" value="A=1-83"/>
</dbReference>
<dbReference type="PDB" id="5WQR">
    <property type="method" value="X-ray"/>
    <property type="resolution" value="0.80 A"/>
    <property type="chains" value="A=1-83"/>
</dbReference>
<dbReference type="PDB" id="6AIQ">
    <property type="method" value="X-ray"/>
    <property type="resolution" value="0.85 A"/>
    <property type="chains" value="A=1-83"/>
</dbReference>
<dbReference type="PDB" id="6AIR">
    <property type="method" value="X-ray"/>
    <property type="resolution" value="0.85 A"/>
    <property type="chains" value="A=1-83"/>
</dbReference>
<dbReference type="PDB" id="7C52">
    <property type="method" value="X-ray"/>
    <property type="resolution" value="2.89 A"/>
    <property type="chains" value="b=1-83"/>
</dbReference>
<dbReference type="PDB" id="7VOS">
    <property type="method" value="Other"/>
    <property type="resolution" value="0.66 A"/>
    <property type="chains" value="A=1-83"/>
</dbReference>
<dbReference type="PDBsum" id="1EYT"/>
<dbReference type="PDBsum" id="1IUA"/>
<dbReference type="PDBsum" id="2AMS"/>
<dbReference type="PDBsum" id="2FLA"/>
<dbReference type="PDBsum" id="3A38"/>
<dbReference type="PDBsum" id="3A39"/>
<dbReference type="PDBsum" id="5D8V"/>
<dbReference type="PDBsum" id="5WQQ"/>
<dbReference type="PDBsum" id="5WQR"/>
<dbReference type="PDBsum" id="6AIQ"/>
<dbReference type="PDBsum" id="6AIR"/>
<dbReference type="PDBsum" id="7C52"/>
<dbReference type="PDBsum" id="7VOS"/>
<dbReference type="SMR" id="P80176"/>
<dbReference type="EvolutionaryTrace" id="P80176"/>
<dbReference type="GO" id="GO:0051539">
    <property type="term" value="F:4 iron, 4 sulfur cluster binding"/>
    <property type="evidence" value="ECO:0007669"/>
    <property type="project" value="UniProtKB-KW"/>
</dbReference>
<dbReference type="GO" id="GO:0009055">
    <property type="term" value="F:electron transfer activity"/>
    <property type="evidence" value="ECO:0007669"/>
    <property type="project" value="InterPro"/>
</dbReference>
<dbReference type="GO" id="GO:0046872">
    <property type="term" value="F:metal ion binding"/>
    <property type="evidence" value="ECO:0007669"/>
    <property type="project" value="UniProtKB-KW"/>
</dbReference>
<dbReference type="GO" id="GO:0019646">
    <property type="term" value="P:aerobic electron transport chain"/>
    <property type="evidence" value="ECO:0007669"/>
    <property type="project" value="InterPro"/>
</dbReference>
<dbReference type="Gene3D" id="4.10.490.10">
    <property type="entry name" value="High potential iron-sulphur protein"/>
    <property type="match status" value="1"/>
</dbReference>
<dbReference type="InterPro" id="IPR000170">
    <property type="entry name" value="High_potential_FeS_prot"/>
</dbReference>
<dbReference type="InterPro" id="IPR036369">
    <property type="entry name" value="HIPIP_sf"/>
</dbReference>
<dbReference type="Pfam" id="PF01355">
    <property type="entry name" value="HIPIP"/>
    <property type="match status" value="1"/>
</dbReference>
<dbReference type="SUPFAM" id="SSF57652">
    <property type="entry name" value="HIPIP (high potential iron protein)"/>
    <property type="match status" value="1"/>
</dbReference>
<dbReference type="PROSITE" id="PS51373">
    <property type="entry name" value="HIPIP"/>
    <property type="match status" value="1"/>
</dbReference>
<keyword id="KW-0002">3D-structure</keyword>
<keyword id="KW-0004">4Fe-4S</keyword>
<keyword id="KW-0903">Direct protein sequencing</keyword>
<keyword id="KW-0249">Electron transport</keyword>
<keyword id="KW-0408">Iron</keyword>
<keyword id="KW-0411">Iron-sulfur</keyword>
<keyword id="KW-0479">Metal-binding</keyword>
<keyword id="KW-0813">Transport</keyword>
<comment type="function">
    <text>Specific class of high-redox-potential 4Fe-4S ferredoxins. Functions in anaerobic electron transport in most purple and in some other photosynthetic bacteria and in at least one genus (Paracoccus) of halophilic, denitrifying bacteria.</text>
</comment>
<comment type="biophysicochemical properties">
    <redoxPotential>
        <text>E(0) is +323 mV.</text>
    </redoxPotential>
    <temperatureDependence>
        <text>Thermostable.</text>
    </temperatureDependence>
</comment>
<comment type="subunit">
    <text evidence="4">Homodimer.</text>
</comment>
<comment type="similarity">
    <text evidence="1">Belongs to the high-potential iron-sulfur protein (HiPIP) family.</text>
</comment>
<proteinExistence type="evidence at protein level"/>
<gene>
    <name type="primary">hip</name>
</gene>
<organism>
    <name type="scientific">Thermochromatium tepidum</name>
    <name type="common">Chromatium tepidum</name>
    <dbReference type="NCBI Taxonomy" id="1050"/>
    <lineage>
        <taxon>Bacteria</taxon>
        <taxon>Pseudomonadati</taxon>
        <taxon>Pseudomonadota</taxon>
        <taxon>Gammaproteobacteria</taxon>
        <taxon>Chromatiales</taxon>
        <taxon>Chromatiaceae</taxon>
        <taxon>Thermochromatium</taxon>
    </lineage>
</organism>
<name>HIP_THETI</name>
<reference key="1">
    <citation type="journal article" date="1993" name="Arch. Biochem. Biophys.">
        <title>Primary structure of Chromatium tepidum high-potential iron-sulfur protein in relation to thermal denaturation.</title>
        <authorList>
            <person name="Moulis J.-M."/>
            <person name="Scherrer N."/>
            <person name="Gagnon J."/>
            <person name="Forest E."/>
            <person name="Petillot Y."/>
            <person name="Garcia D."/>
        </authorList>
    </citation>
    <scope>PROTEIN SEQUENCE</scope>
    <source>
        <strain>ATCC 43061 / DSM 3771 / MC</strain>
    </source>
</reference>
<reference key="2">
    <citation type="journal article" date="2000" name="Proc. Natl. Acad. Sci. U.S.A.">
        <title>Crystal structures of photosynthetic reaction center and high-potential iron-sulfur protein from Thermochromatium tepidum: thermostability and electron transfer.</title>
        <authorList>
            <person name="Nogi T."/>
            <person name="Fathir I."/>
            <person name="Kobayashi M."/>
            <person name="Nozawa T."/>
            <person name="Miki K."/>
        </authorList>
    </citation>
    <scope>X-RAY CRYSTALLOGRAPHY (1.5 ANGSTROMS) IN COMPLEX WITH IRON-SULFUR (4FE-4S)</scope>
</reference>
<reference key="3">
    <citation type="journal article" date="2002" name="Acta Crystallogr. D">
        <title>Ultrahigh-resolution structure of high-potential iron-sulfur protein from Thermochromatium tepidum.</title>
        <authorList>
            <person name="Liu L."/>
            <person name="Nogi T."/>
            <person name="Kobayashi M."/>
            <person name="Nozawa T."/>
            <person name="Miki K."/>
        </authorList>
    </citation>
    <scope>X-RAY CRYSTALLOGRAPHY (0.8 ANGSTROMS) IN COMPLEX WITH IRON-SULFUR (4FE-4S)</scope>
</reference>
<evidence type="ECO:0000255" key="1">
    <source>
        <dbReference type="PROSITE-ProRule" id="PRU00705"/>
    </source>
</evidence>
<evidence type="ECO:0000269" key="2">
    <source>
    </source>
</evidence>
<evidence type="ECO:0000269" key="3">
    <source>
    </source>
</evidence>
<evidence type="ECO:0000305" key="4"/>
<evidence type="ECO:0007829" key="5">
    <source>
        <dbReference type="PDB" id="5D8V"/>
    </source>
</evidence>
<sequence>AAPANAVTADDPTAIALKYNQDATKSERVAAARPGLPPEEQHCANCQFMQANVGEGDWKGCQLFPGKLINVNGWCASWTLKAG</sequence>